<accession>Q6YBR5</accession>
<accession>Q504K7</accession>
<organism>
    <name type="scientific">Danio rerio</name>
    <name type="common">Zebrafish</name>
    <name type="synonym">Brachydanio rerio</name>
    <dbReference type="NCBI Taxonomy" id="7955"/>
    <lineage>
        <taxon>Eukaryota</taxon>
        <taxon>Metazoa</taxon>
        <taxon>Chordata</taxon>
        <taxon>Craniata</taxon>
        <taxon>Vertebrata</taxon>
        <taxon>Euteleostomi</taxon>
        <taxon>Actinopterygii</taxon>
        <taxon>Neopterygii</taxon>
        <taxon>Teleostei</taxon>
        <taxon>Ostariophysi</taxon>
        <taxon>Cypriniformes</taxon>
        <taxon>Danionidae</taxon>
        <taxon>Danioninae</taxon>
        <taxon>Danio</taxon>
    </lineage>
</organism>
<feature type="signal peptide" evidence="3">
    <location>
        <begin position="1"/>
        <end position="18"/>
    </location>
</feature>
<feature type="propeptide" id="PRO_0000019617" evidence="3">
    <location>
        <begin position="19"/>
        <end position="76"/>
    </location>
</feature>
<feature type="chain" id="PRO_0000019618" description="Nerve growth factor">
    <location>
        <begin position="77"/>
        <end position="194"/>
    </location>
</feature>
<feature type="region of interest" description="Disordered" evidence="4">
    <location>
        <begin position="54"/>
        <end position="84"/>
    </location>
</feature>
<feature type="glycosylation site" description="N-linked (GlcNAc...) asparagine" evidence="3">
    <location>
        <position position="99"/>
    </location>
</feature>
<feature type="glycosylation site" description="N-linked (GlcNAc...) asparagine" evidence="3">
    <location>
        <position position="120"/>
    </location>
</feature>
<feature type="disulfide bond" evidence="1">
    <location>
        <begin position="90"/>
        <end position="155"/>
    </location>
</feature>
<feature type="disulfide bond" evidence="1">
    <location>
        <begin position="133"/>
        <end position="183"/>
    </location>
</feature>
<feature type="disulfide bond" evidence="1">
    <location>
        <begin position="143"/>
        <end position="185"/>
    </location>
</feature>
<proteinExistence type="evidence at protein level"/>
<sequence>MRWSMLVLLLLSCSQTFAQRPGDICPQNPHHGQDVTANTVPTVDPKLFNKRRYRSPRVLFSEHPPDSEPSRSRTKRKAGPPQHRGVYSVCESISHWEGNKTKATDITGNEVTVLPDVIINNSKKKQYFFETTCSSGRTGGSGCLGIDARHWNSYCTNSHTFVRALTSFKNLVAWRLIRINVACVCVLSRKSWRA</sequence>
<dbReference type="EMBL" id="AY162414">
    <property type="protein sequence ID" value="AAP15472.1"/>
    <property type="molecule type" value="Genomic_DNA"/>
</dbReference>
<dbReference type="EMBL" id="AY162415">
    <property type="protein sequence ID" value="AAO31810.1"/>
    <property type="molecule type" value="mRNA"/>
</dbReference>
<dbReference type="EMBL" id="AY162416">
    <property type="protein sequence ID" value="AAO31811.1"/>
    <property type="molecule type" value="mRNA"/>
</dbReference>
<dbReference type="EMBL" id="AY162417">
    <property type="protein sequence ID" value="AAO31812.1"/>
    <property type="molecule type" value="mRNA"/>
</dbReference>
<dbReference type="EMBL" id="AY162418">
    <property type="protein sequence ID" value="AAO31813.1"/>
    <property type="molecule type" value="mRNA"/>
</dbReference>
<dbReference type="EMBL" id="AY162419">
    <property type="protein sequence ID" value="AAO31814.1"/>
    <property type="molecule type" value="mRNA"/>
</dbReference>
<dbReference type="EMBL" id="AY162420">
    <property type="protein sequence ID" value="AAO31815.1"/>
    <property type="molecule type" value="mRNA"/>
</dbReference>
<dbReference type="EMBL" id="BC094968">
    <property type="protein sequence ID" value="AAH94968.1"/>
    <property type="molecule type" value="mRNA"/>
</dbReference>
<dbReference type="RefSeq" id="NP_954680.1">
    <property type="nucleotide sequence ID" value="NM_199210.1"/>
</dbReference>
<dbReference type="SMR" id="Q6YBR5"/>
<dbReference type="FunCoup" id="Q6YBR5">
    <property type="interactions" value="1744"/>
</dbReference>
<dbReference type="IntAct" id="Q6YBR5">
    <property type="interactions" value="2"/>
</dbReference>
<dbReference type="STRING" id="7955.ENSDARP00000065032"/>
<dbReference type="GlyCosmos" id="Q6YBR5">
    <property type="glycosylation" value="2 sites, No reported glycans"/>
</dbReference>
<dbReference type="PaxDb" id="7955-ENSDARP00000065032"/>
<dbReference type="Ensembl" id="ENSDART00000065033">
    <property type="protein sequence ID" value="ENSDARP00000065032"/>
    <property type="gene ID" value="ENSDARG00000014050"/>
</dbReference>
<dbReference type="Ensembl" id="ENSDART00000103376">
    <property type="protein sequence ID" value="ENSDARP00000094153"/>
    <property type="gene ID" value="ENSDARG00000014050"/>
</dbReference>
<dbReference type="Ensembl" id="ENSDART00000132131">
    <property type="protein sequence ID" value="ENSDARP00000115321"/>
    <property type="gene ID" value="ENSDARG00000014050"/>
</dbReference>
<dbReference type="Ensembl" id="ENSDART00000132347">
    <property type="protein sequence ID" value="ENSDARP00000121658"/>
    <property type="gene ID" value="ENSDARG00000014050"/>
</dbReference>
<dbReference type="Ensembl" id="ENSDART00000132867">
    <property type="protein sequence ID" value="ENSDARP00000121753"/>
    <property type="gene ID" value="ENSDARG00000014050"/>
</dbReference>
<dbReference type="Ensembl" id="ENSDART00000143252">
    <property type="protein sequence ID" value="ENSDARP00000122624"/>
    <property type="gene ID" value="ENSDARG00000014050"/>
</dbReference>
<dbReference type="Ensembl" id="ENSDART00000182255">
    <property type="protein sequence ID" value="ENSDARP00000151408"/>
    <property type="gene ID" value="ENSDARG00000014050"/>
</dbReference>
<dbReference type="GeneID" id="58133"/>
<dbReference type="KEGG" id="dre:58133"/>
<dbReference type="AGR" id="ZFIN:ZDB-GENE-000629-2"/>
<dbReference type="CTD" id="58133"/>
<dbReference type="ZFIN" id="ZDB-GENE-000629-2">
    <property type="gene designation" value="ngfb"/>
</dbReference>
<dbReference type="eggNOG" id="ENOG502RYPU">
    <property type="taxonomic scope" value="Eukaryota"/>
</dbReference>
<dbReference type="HOGENOM" id="CLU_059942_2_0_1"/>
<dbReference type="InParanoid" id="Q6YBR5"/>
<dbReference type="OMA" id="ETTCHSA"/>
<dbReference type="OrthoDB" id="6491780at2759"/>
<dbReference type="PhylomeDB" id="Q6YBR5"/>
<dbReference type="TreeFam" id="TF106463"/>
<dbReference type="Reactome" id="R-DRE-167060">
    <property type="pathway name" value="NGF processing"/>
</dbReference>
<dbReference type="Reactome" id="R-DRE-170984">
    <property type="pathway name" value="ARMS-mediated activation"/>
</dbReference>
<dbReference type="Reactome" id="R-DRE-205017">
    <property type="pathway name" value="NFG and proNGF binds to p75NTR"/>
</dbReference>
<dbReference type="Reactome" id="R-DRE-209543">
    <property type="pathway name" value="p75NTR recruits signalling complexes"/>
</dbReference>
<dbReference type="Reactome" id="R-DRE-209563">
    <property type="pathway name" value="Axonal growth stimulation"/>
</dbReference>
<dbReference type="PRO" id="PR:Q6YBR5"/>
<dbReference type="Proteomes" id="UP000000437">
    <property type="component" value="Alternate scaffold 6"/>
</dbReference>
<dbReference type="Proteomes" id="UP000000437">
    <property type="component" value="Chromosome 6"/>
</dbReference>
<dbReference type="Bgee" id="ENSDARG00000014050">
    <property type="expression patterns" value="Expressed in alar plate midbrain and 35 other cell types or tissues"/>
</dbReference>
<dbReference type="ExpressionAtlas" id="Q6YBR5">
    <property type="expression patterns" value="baseline"/>
</dbReference>
<dbReference type="GO" id="GO:0030424">
    <property type="term" value="C:axon"/>
    <property type="evidence" value="ECO:0000318"/>
    <property type="project" value="GO_Central"/>
</dbReference>
<dbReference type="GO" id="GO:0030425">
    <property type="term" value="C:dendrite"/>
    <property type="evidence" value="ECO:0000318"/>
    <property type="project" value="GO_Central"/>
</dbReference>
<dbReference type="GO" id="GO:0005615">
    <property type="term" value="C:extracellular space"/>
    <property type="evidence" value="ECO:0000318"/>
    <property type="project" value="GO_Central"/>
</dbReference>
<dbReference type="GO" id="GO:0008021">
    <property type="term" value="C:synaptic vesicle"/>
    <property type="evidence" value="ECO:0000318"/>
    <property type="project" value="GO_Central"/>
</dbReference>
<dbReference type="GO" id="GO:0008083">
    <property type="term" value="F:growth factor activity"/>
    <property type="evidence" value="ECO:0000318"/>
    <property type="project" value="GO_Central"/>
</dbReference>
<dbReference type="GO" id="GO:0005163">
    <property type="term" value="F:nerve growth factor receptor binding"/>
    <property type="evidence" value="ECO:0000318"/>
    <property type="project" value="GO_Central"/>
</dbReference>
<dbReference type="GO" id="GO:0007169">
    <property type="term" value="P:cell surface receptor protein tyrosine kinase signaling pathway"/>
    <property type="evidence" value="ECO:0000318"/>
    <property type="project" value="GO_Central"/>
</dbReference>
<dbReference type="GO" id="GO:0050804">
    <property type="term" value="P:modulation of chemical synaptic transmission"/>
    <property type="evidence" value="ECO:0000318"/>
    <property type="project" value="GO_Central"/>
</dbReference>
<dbReference type="GO" id="GO:0043524">
    <property type="term" value="P:negative regulation of neuron apoptotic process"/>
    <property type="evidence" value="ECO:0000318"/>
    <property type="project" value="GO_Central"/>
</dbReference>
<dbReference type="GO" id="GO:0021675">
    <property type="term" value="P:nerve development"/>
    <property type="evidence" value="ECO:0000318"/>
    <property type="project" value="GO_Central"/>
</dbReference>
<dbReference type="GO" id="GO:0038180">
    <property type="term" value="P:nerve growth factor signaling pathway"/>
    <property type="evidence" value="ECO:0000318"/>
    <property type="project" value="GO_Central"/>
</dbReference>
<dbReference type="GO" id="GO:0048812">
    <property type="term" value="P:neuron projection morphogenesis"/>
    <property type="evidence" value="ECO:0000318"/>
    <property type="project" value="GO_Central"/>
</dbReference>
<dbReference type="FunFam" id="2.10.90.10:FF:000002">
    <property type="entry name" value="Brain-derived neurotrophic factor"/>
    <property type="match status" value="1"/>
</dbReference>
<dbReference type="Gene3D" id="2.10.90.10">
    <property type="entry name" value="Cystine-knot cytokines"/>
    <property type="match status" value="1"/>
</dbReference>
<dbReference type="InterPro" id="IPR029034">
    <property type="entry name" value="Cystine-knot_cytokine"/>
</dbReference>
<dbReference type="InterPro" id="IPR020408">
    <property type="entry name" value="Nerve_growth_factor-like"/>
</dbReference>
<dbReference type="InterPro" id="IPR002072">
    <property type="entry name" value="Nerve_growth_factor-rel"/>
</dbReference>
<dbReference type="InterPro" id="IPR019846">
    <property type="entry name" value="Nerve_growth_factor_CS"/>
</dbReference>
<dbReference type="PANTHER" id="PTHR11589:SF10">
    <property type="entry name" value="BETA-NERVE GROWTH FACTOR"/>
    <property type="match status" value="1"/>
</dbReference>
<dbReference type="PANTHER" id="PTHR11589">
    <property type="entry name" value="NERVE GROWTH FACTOR NGF -RELATED"/>
    <property type="match status" value="1"/>
</dbReference>
<dbReference type="Pfam" id="PF00243">
    <property type="entry name" value="NGF"/>
    <property type="match status" value="1"/>
</dbReference>
<dbReference type="PIRSF" id="PIRSF001789">
    <property type="entry name" value="NGF"/>
    <property type="match status" value="1"/>
</dbReference>
<dbReference type="PRINTS" id="PR00268">
    <property type="entry name" value="NGF"/>
</dbReference>
<dbReference type="SMART" id="SM00140">
    <property type="entry name" value="NGF"/>
    <property type="match status" value="1"/>
</dbReference>
<dbReference type="SUPFAM" id="SSF57501">
    <property type="entry name" value="Cystine-knot cytokines"/>
    <property type="match status" value="1"/>
</dbReference>
<dbReference type="PROSITE" id="PS00248">
    <property type="entry name" value="NGF_1"/>
    <property type="match status" value="1"/>
</dbReference>
<dbReference type="PROSITE" id="PS50270">
    <property type="entry name" value="NGF_2"/>
    <property type="match status" value="1"/>
</dbReference>
<comment type="function">
    <text evidence="2">Nerve growth factor is important for the development and maintenance of the sympathetic and sensory nervous systems. It stimulates division and differentiation of sympathetic and embryonic sensory neurons (By similarity).</text>
</comment>
<comment type="subunit">
    <text evidence="2">Homodimer.</text>
</comment>
<comment type="interaction">
    <interactant intactId="EBI-42473907">
        <id>Q6YBR5</id>
    </interactant>
    <interactant intactId="EBI-42473882">
        <id>Z4YIA7</id>
        <label>calua</label>
    </interactant>
    <organismsDiffer>false</organismsDiffer>
    <experiments>2</experiments>
</comment>
<comment type="subcellular location">
    <subcellularLocation>
        <location evidence="2">Secreted</location>
    </subcellularLocation>
</comment>
<comment type="similarity">
    <text evidence="5">Belongs to the NGF-beta family.</text>
</comment>
<protein>
    <recommendedName>
        <fullName>Nerve growth factor</fullName>
        <shortName>NGF</shortName>
        <shortName>zNGF</shortName>
    </recommendedName>
</protein>
<name>NGF_DANRE</name>
<reference key="1">
    <citation type="journal article" date="2003" name="Mol. Cell. Neurosci.">
        <title>Insert-containing neurotrophins in teleost fish and their relationship to nerve growth factor.</title>
        <authorList>
            <person name="Dethleffsen K."/>
            <person name="Heinrich G."/>
            <person name="Lauth M."/>
            <person name="Knapik E.W."/>
            <person name="Meyer M."/>
        </authorList>
    </citation>
    <scope>NUCLEOTIDE SEQUENCE [GENOMIC DNA / MRNA]</scope>
</reference>
<reference key="2">
    <citation type="submission" date="2005-05" db="EMBL/GenBank/DDBJ databases">
        <authorList>
            <consortium name="NIH - Zebrafish Gene Collection (ZGC) project"/>
        </authorList>
    </citation>
    <scope>NUCLEOTIDE SEQUENCE [LARGE SCALE MRNA]</scope>
    <source>
        <tissue>Olfactory epithelium</tissue>
    </source>
</reference>
<evidence type="ECO:0000250" key="1"/>
<evidence type="ECO:0000250" key="2">
    <source>
        <dbReference type="UniProtKB" id="P01138"/>
    </source>
</evidence>
<evidence type="ECO:0000255" key="3"/>
<evidence type="ECO:0000256" key="4">
    <source>
        <dbReference type="SAM" id="MobiDB-lite"/>
    </source>
</evidence>
<evidence type="ECO:0000305" key="5"/>
<gene>
    <name type="primary">ngf</name>
    <name type="synonym">ngfb</name>
</gene>
<keyword id="KW-0165">Cleavage on pair of basic residues</keyword>
<keyword id="KW-1015">Disulfide bond</keyword>
<keyword id="KW-0325">Glycoprotein</keyword>
<keyword id="KW-0339">Growth factor</keyword>
<keyword id="KW-1185">Reference proteome</keyword>
<keyword id="KW-0964">Secreted</keyword>
<keyword id="KW-0732">Signal</keyword>